<accession>A6VL80</accession>
<proteinExistence type="inferred from homology"/>
<gene>
    <name evidence="1" type="primary">hslV</name>
    <name type="ordered locus">Asuc_0349</name>
</gene>
<feature type="chain" id="PRO_1000071845" description="ATP-dependent protease subunit HslV">
    <location>
        <begin position="1"/>
        <end position="173"/>
    </location>
</feature>
<feature type="active site" evidence="1">
    <location>
        <position position="2"/>
    </location>
</feature>
<feature type="binding site" evidence="1">
    <location>
        <position position="158"/>
    </location>
    <ligand>
        <name>Na(+)</name>
        <dbReference type="ChEBI" id="CHEBI:29101"/>
    </ligand>
</feature>
<feature type="binding site" evidence="1">
    <location>
        <position position="161"/>
    </location>
    <ligand>
        <name>Na(+)</name>
        <dbReference type="ChEBI" id="CHEBI:29101"/>
    </ligand>
</feature>
<feature type="binding site" evidence="1">
    <location>
        <position position="164"/>
    </location>
    <ligand>
        <name>Na(+)</name>
        <dbReference type="ChEBI" id="CHEBI:29101"/>
    </ligand>
</feature>
<name>HSLV_ACTSZ</name>
<dbReference type="EC" id="3.4.25.2" evidence="1"/>
<dbReference type="EMBL" id="CP000746">
    <property type="protein sequence ID" value="ABR73727.1"/>
    <property type="molecule type" value="Genomic_DNA"/>
</dbReference>
<dbReference type="RefSeq" id="WP_011979002.1">
    <property type="nucleotide sequence ID" value="NC_009655.1"/>
</dbReference>
<dbReference type="SMR" id="A6VL80"/>
<dbReference type="STRING" id="339671.Asuc_0349"/>
<dbReference type="MEROPS" id="T01.007"/>
<dbReference type="KEGG" id="asu:Asuc_0349"/>
<dbReference type="eggNOG" id="COG5405">
    <property type="taxonomic scope" value="Bacteria"/>
</dbReference>
<dbReference type="HOGENOM" id="CLU_093872_1_0_6"/>
<dbReference type="OrthoDB" id="9804884at2"/>
<dbReference type="Proteomes" id="UP000001114">
    <property type="component" value="Chromosome"/>
</dbReference>
<dbReference type="GO" id="GO:0009376">
    <property type="term" value="C:HslUV protease complex"/>
    <property type="evidence" value="ECO:0007669"/>
    <property type="project" value="UniProtKB-UniRule"/>
</dbReference>
<dbReference type="GO" id="GO:0005839">
    <property type="term" value="C:proteasome core complex"/>
    <property type="evidence" value="ECO:0007669"/>
    <property type="project" value="InterPro"/>
</dbReference>
<dbReference type="GO" id="GO:0046872">
    <property type="term" value="F:metal ion binding"/>
    <property type="evidence" value="ECO:0007669"/>
    <property type="project" value="UniProtKB-KW"/>
</dbReference>
<dbReference type="GO" id="GO:0004298">
    <property type="term" value="F:threonine-type endopeptidase activity"/>
    <property type="evidence" value="ECO:0007669"/>
    <property type="project" value="UniProtKB-KW"/>
</dbReference>
<dbReference type="GO" id="GO:0051603">
    <property type="term" value="P:proteolysis involved in protein catabolic process"/>
    <property type="evidence" value="ECO:0007669"/>
    <property type="project" value="InterPro"/>
</dbReference>
<dbReference type="CDD" id="cd01913">
    <property type="entry name" value="protease_HslV"/>
    <property type="match status" value="1"/>
</dbReference>
<dbReference type="FunFam" id="3.60.20.10:FF:000002">
    <property type="entry name" value="ATP-dependent protease subunit HslV"/>
    <property type="match status" value="1"/>
</dbReference>
<dbReference type="Gene3D" id="3.60.20.10">
    <property type="entry name" value="Glutamine Phosphoribosylpyrophosphate, subunit 1, domain 1"/>
    <property type="match status" value="1"/>
</dbReference>
<dbReference type="HAMAP" id="MF_00248">
    <property type="entry name" value="HslV"/>
    <property type="match status" value="1"/>
</dbReference>
<dbReference type="InterPro" id="IPR022281">
    <property type="entry name" value="ATP-dep_Prtase_HsIV_su"/>
</dbReference>
<dbReference type="InterPro" id="IPR029055">
    <property type="entry name" value="Ntn_hydrolases_N"/>
</dbReference>
<dbReference type="InterPro" id="IPR001353">
    <property type="entry name" value="Proteasome_sua/b"/>
</dbReference>
<dbReference type="InterPro" id="IPR023333">
    <property type="entry name" value="Proteasome_suB-type"/>
</dbReference>
<dbReference type="NCBIfam" id="TIGR03692">
    <property type="entry name" value="ATP_dep_HslV"/>
    <property type="match status" value="1"/>
</dbReference>
<dbReference type="NCBIfam" id="NF003964">
    <property type="entry name" value="PRK05456.1"/>
    <property type="match status" value="1"/>
</dbReference>
<dbReference type="PANTHER" id="PTHR32194:SF0">
    <property type="entry name" value="ATP-DEPENDENT PROTEASE SUBUNIT HSLV"/>
    <property type="match status" value="1"/>
</dbReference>
<dbReference type="PANTHER" id="PTHR32194">
    <property type="entry name" value="METALLOPROTEASE TLDD"/>
    <property type="match status" value="1"/>
</dbReference>
<dbReference type="Pfam" id="PF00227">
    <property type="entry name" value="Proteasome"/>
    <property type="match status" value="1"/>
</dbReference>
<dbReference type="PIRSF" id="PIRSF039093">
    <property type="entry name" value="HslV"/>
    <property type="match status" value="1"/>
</dbReference>
<dbReference type="SUPFAM" id="SSF56235">
    <property type="entry name" value="N-terminal nucleophile aminohydrolases (Ntn hydrolases)"/>
    <property type="match status" value="1"/>
</dbReference>
<dbReference type="PROSITE" id="PS51476">
    <property type="entry name" value="PROTEASOME_BETA_2"/>
    <property type="match status" value="1"/>
</dbReference>
<comment type="function">
    <text evidence="1">Protease subunit of a proteasome-like degradation complex believed to be a general protein degrading machinery.</text>
</comment>
<comment type="catalytic activity">
    <reaction evidence="1">
        <text>ATP-dependent cleavage of peptide bonds with broad specificity.</text>
        <dbReference type="EC" id="3.4.25.2"/>
    </reaction>
</comment>
<comment type="activity regulation">
    <text evidence="1">Allosterically activated by HslU binding.</text>
</comment>
<comment type="subunit">
    <text evidence="1">A double ring-shaped homohexamer of HslV is capped on each side by a ring-shaped HslU homohexamer. The assembly of the HslU/HslV complex is dependent on binding of ATP.</text>
</comment>
<comment type="subcellular location">
    <subcellularLocation>
        <location evidence="1">Cytoplasm</location>
    </subcellularLocation>
</comment>
<comment type="similarity">
    <text evidence="1">Belongs to the peptidase T1B family. HslV subfamily.</text>
</comment>
<keyword id="KW-0021">Allosteric enzyme</keyword>
<keyword id="KW-0963">Cytoplasm</keyword>
<keyword id="KW-0378">Hydrolase</keyword>
<keyword id="KW-0479">Metal-binding</keyword>
<keyword id="KW-0645">Protease</keyword>
<keyword id="KW-1185">Reference proteome</keyword>
<keyword id="KW-0915">Sodium</keyword>
<keyword id="KW-0888">Threonine protease</keyword>
<organism>
    <name type="scientific">Actinobacillus succinogenes (strain ATCC 55618 / DSM 22257 / CCUG 43843 / 130Z)</name>
    <dbReference type="NCBI Taxonomy" id="339671"/>
    <lineage>
        <taxon>Bacteria</taxon>
        <taxon>Pseudomonadati</taxon>
        <taxon>Pseudomonadota</taxon>
        <taxon>Gammaproteobacteria</taxon>
        <taxon>Pasteurellales</taxon>
        <taxon>Pasteurellaceae</taxon>
        <taxon>Actinobacillus</taxon>
    </lineage>
</organism>
<evidence type="ECO:0000255" key="1">
    <source>
        <dbReference type="HAMAP-Rule" id="MF_00248"/>
    </source>
</evidence>
<sequence>MTTIVCVRKDGKVAIGGDGQATLGNSVEKGTVRKVRRTYKGKVVTGFAGSTADAFILLELFEKKLELHQGHLVKSAVELAKEWRTERSLRRLEAMMIVADETDFLLISGSGDVIEPEFDVLAIGSGGNYAKSAALALLRTENNLTAVEIVKEALTVAGDIDIYTNHNHIIEEI</sequence>
<protein>
    <recommendedName>
        <fullName evidence="1">ATP-dependent protease subunit HslV</fullName>
        <ecNumber evidence="1">3.4.25.2</ecNumber>
    </recommendedName>
</protein>
<reference key="1">
    <citation type="journal article" date="2010" name="BMC Genomics">
        <title>A genomic perspective on the potential of Actinobacillus succinogenes for industrial succinate production.</title>
        <authorList>
            <person name="McKinlay J.B."/>
            <person name="Laivenieks M."/>
            <person name="Schindler B.D."/>
            <person name="McKinlay A.A."/>
            <person name="Siddaramappa S."/>
            <person name="Challacombe J.F."/>
            <person name="Lowry S.R."/>
            <person name="Clum A."/>
            <person name="Lapidus A.L."/>
            <person name="Burkhart K.B."/>
            <person name="Harkins V."/>
            <person name="Vieille C."/>
        </authorList>
    </citation>
    <scope>NUCLEOTIDE SEQUENCE [LARGE SCALE GENOMIC DNA]</scope>
    <source>
        <strain>ATCC 55618 / DSM 22257 / CCUG 43843 / 130Z</strain>
    </source>
</reference>